<feature type="chain" id="PRO_0000131959" description="Cytidylate kinase">
    <location>
        <begin position="1"/>
        <end position="230"/>
    </location>
</feature>
<feature type="binding site" evidence="1">
    <location>
        <begin position="17"/>
        <end position="25"/>
    </location>
    <ligand>
        <name>ATP</name>
        <dbReference type="ChEBI" id="CHEBI:30616"/>
    </ligand>
</feature>
<keyword id="KW-0067">ATP-binding</keyword>
<keyword id="KW-0963">Cytoplasm</keyword>
<keyword id="KW-0418">Kinase</keyword>
<keyword id="KW-0547">Nucleotide-binding</keyword>
<keyword id="KW-1185">Reference proteome</keyword>
<keyword id="KW-0808">Transferase</keyword>
<proteinExistence type="inferred from homology"/>
<reference key="1">
    <citation type="journal article" date="2002" name="Nature">
        <title>Genome sequence of the plant pathogen Ralstonia solanacearum.</title>
        <authorList>
            <person name="Salanoubat M."/>
            <person name="Genin S."/>
            <person name="Artiguenave F."/>
            <person name="Gouzy J."/>
            <person name="Mangenot S."/>
            <person name="Arlat M."/>
            <person name="Billault A."/>
            <person name="Brottier P."/>
            <person name="Camus J.-C."/>
            <person name="Cattolico L."/>
            <person name="Chandler M."/>
            <person name="Choisne N."/>
            <person name="Claudel-Renard C."/>
            <person name="Cunnac S."/>
            <person name="Demange N."/>
            <person name="Gaspin C."/>
            <person name="Lavie M."/>
            <person name="Moisan A."/>
            <person name="Robert C."/>
            <person name="Saurin W."/>
            <person name="Schiex T."/>
            <person name="Siguier P."/>
            <person name="Thebault P."/>
            <person name="Whalen M."/>
            <person name="Wincker P."/>
            <person name="Levy M."/>
            <person name="Weissenbach J."/>
            <person name="Boucher C.A."/>
        </authorList>
    </citation>
    <scope>NUCLEOTIDE SEQUENCE [LARGE SCALE GENOMIC DNA]</scope>
    <source>
        <strain>ATCC BAA-1114 / GMI1000</strain>
    </source>
</reference>
<evidence type="ECO:0000255" key="1">
    <source>
        <dbReference type="HAMAP-Rule" id="MF_00238"/>
    </source>
</evidence>
<gene>
    <name evidence="1" type="primary">cmk</name>
    <name type="ordered locus">RSc0908</name>
    <name type="ORF">RS04507</name>
</gene>
<organism>
    <name type="scientific">Ralstonia nicotianae (strain ATCC BAA-1114 / GMI1000)</name>
    <name type="common">Ralstonia solanacearum</name>
    <dbReference type="NCBI Taxonomy" id="267608"/>
    <lineage>
        <taxon>Bacteria</taxon>
        <taxon>Pseudomonadati</taxon>
        <taxon>Pseudomonadota</taxon>
        <taxon>Betaproteobacteria</taxon>
        <taxon>Burkholderiales</taxon>
        <taxon>Burkholderiaceae</taxon>
        <taxon>Ralstonia</taxon>
        <taxon>Ralstonia solanacearum species complex</taxon>
    </lineage>
</organism>
<name>KCY_RALN1</name>
<sequence>MSDVAAFTAYPVIAIDGPTASGKGTVAHQIADLLGFHYLDSGSLYRLVAFVSIRENIDDHDVNSLVRIASELDVRFKADHIWLKGEDVSLALRHESVGNQASAIAVHGPVREALRARQRAFLEAPGLVADGRDMGTVIFPEAVLKVFLTASVQARAERRYKQLIAKGFSATVESLSRDLEARDLRDRTRSVAPLRPAEAARLLDSSDMSVDEVVAQVLDWYRQVQGVKAR</sequence>
<accession>Q8Y0Y5</accession>
<dbReference type="EC" id="2.7.4.25" evidence="1"/>
<dbReference type="EMBL" id="AL646052">
    <property type="protein sequence ID" value="CAD14610.1"/>
    <property type="molecule type" value="Genomic_DNA"/>
</dbReference>
<dbReference type="RefSeq" id="WP_011000860.1">
    <property type="nucleotide sequence ID" value="NC_003295.1"/>
</dbReference>
<dbReference type="SMR" id="Q8Y0Y5"/>
<dbReference type="STRING" id="267608.RSc0908"/>
<dbReference type="EnsemblBacteria" id="CAD14610">
    <property type="protein sequence ID" value="CAD14610"/>
    <property type="gene ID" value="RSc0908"/>
</dbReference>
<dbReference type="KEGG" id="rso:RSc0908"/>
<dbReference type="eggNOG" id="COG0283">
    <property type="taxonomic scope" value="Bacteria"/>
</dbReference>
<dbReference type="HOGENOM" id="CLU_079959_2_0_4"/>
<dbReference type="Proteomes" id="UP000001436">
    <property type="component" value="Chromosome"/>
</dbReference>
<dbReference type="GO" id="GO:0005829">
    <property type="term" value="C:cytosol"/>
    <property type="evidence" value="ECO:0007669"/>
    <property type="project" value="TreeGrafter"/>
</dbReference>
<dbReference type="GO" id="GO:0005524">
    <property type="term" value="F:ATP binding"/>
    <property type="evidence" value="ECO:0007669"/>
    <property type="project" value="UniProtKB-UniRule"/>
</dbReference>
<dbReference type="GO" id="GO:0036430">
    <property type="term" value="F:CMP kinase activity"/>
    <property type="evidence" value="ECO:0007669"/>
    <property type="project" value="RHEA"/>
</dbReference>
<dbReference type="GO" id="GO:0036431">
    <property type="term" value="F:dCMP kinase activity"/>
    <property type="evidence" value="ECO:0007669"/>
    <property type="project" value="RHEA"/>
</dbReference>
<dbReference type="GO" id="GO:0015949">
    <property type="term" value="P:nucleobase-containing small molecule interconversion"/>
    <property type="evidence" value="ECO:0007669"/>
    <property type="project" value="TreeGrafter"/>
</dbReference>
<dbReference type="GO" id="GO:0006220">
    <property type="term" value="P:pyrimidine nucleotide metabolic process"/>
    <property type="evidence" value="ECO:0007669"/>
    <property type="project" value="UniProtKB-UniRule"/>
</dbReference>
<dbReference type="CDD" id="cd02020">
    <property type="entry name" value="CMPK"/>
    <property type="match status" value="1"/>
</dbReference>
<dbReference type="Gene3D" id="3.40.50.300">
    <property type="entry name" value="P-loop containing nucleotide triphosphate hydrolases"/>
    <property type="match status" value="1"/>
</dbReference>
<dbReference type="HAMAP" id="MF_00238">
    <property type="entry name" value="Cytidyl_kinase_type1"/>
    <property type="match status" value="1"/>
</dbReference>
<dbReference type="InterPro" id="IPR003136">
    <property type="entry name" value="Cytidylate_kin"/>
</dbReference>
<dbReference type="InterPro" id="IPR011994">
    <property type="entry name" value="Cytidylate_kinase_dom"/>
</dbReference>
<dbReference type="InterPro" id="IPR027417">
    <property type="entry name" value="P-loop_NTPase"/>
</dbReference>
<dbReference type="NCBIfam" id="TIGR00017">
    <property type="entry name" value="cmk"/>
    <property type="match status" value="1"/>
</dbReference>
<dbReference type="PANTHER" id="PTHR21299:SF2">
    <property type="entry name" value="CYTIDYLATE KINASE"/>
    <property type="match status" value="1"/>
</dbReference>
<dbReference type="PANTHER" id="PTHR21299">
    <property type="entry name" value="CYTIDYLATE KINASE/PANTOATE-BETA-ALANINE LIGASE"/>
    <property type="match status" value="1"/>
</dbReference>
<dbReference type="Pfam" id="PF02224">
    <property type="entry name" value="Cytidylate_kin"/>
    <property type="match status" value="1"/>
</dbReference>
<dbReference type="SUPFAM" id="SSF52540">
    <property type="entry name" value="P-loop containing nucleoside triphosphate hydrolases"/>
    <property type="match status" value="1"/>
</dbReference>
<comment type="catalytic activity">
    <reaction evidence="1">
        <text>CMP + ATP = CDP + ADP</text>
        <dbReference type="Rhea" id="RHEA:11600"/>
        <dbReference type="ChEBI" id="CHEBI:30616"/>
        <dbReference type="ChEBI" id="CHEBI:58069"/>
        <dbReference type="ChEBI" id="CHEBI:60377"/>
        <dbReference type="ChEBI" id="CHEBI:456216"/>
        <dbReference type="EC" id="2.7.4.25"/>
    </reaction>
</comment>
<comment type="catalytic activity">
    <reaction evidence="1">
        <text>dCMP + ATP = dCDP + ADP</text>
        <dbReference type="Rhea" id="RHEA:25094"/>
        <dbReference type="ChEBI" id="CHEBI:30616"/>
        <dbReference type="ChEBI" id="CHEBI:57566"/>
        <dbReference type="ChEBI" id="CHEBI:58593"/>
        <dbReference type="ChEBI" id="CHEBI:456216"/>
        <dbReference type="EC" id="2.7.4.25"/>
    </reaction>
</comment>
<comment type="subcellular location">
    <subcellularLocation>
        <location evidence="1">Cytoplasm</location>
    </subcellularLocation>
</comment>
<comment type="similarity">
    <text evidence="1">Belongs to the cytidylate kinase family. Type 1 subfamily.</text>
</comment>
<protein>
    <recommendedName>
        <fullName evidence="1">Cytidylate kinase</fullName>
        <shortName evidence="1">CK</shortName>
        <ecNumber evidence="1">2.7.4.25</ecNumber>
    </recommendedName>
    <alternativeName>
        <fullName evidence="1">Cytidine monophosphate kinase</fullName>
        <shortName evidence="1">CMP kinase</shortName>
    </alternativeName>
</protein>